<keyword id="KW-0021">Allosteric enzyme</keyword>
<keyword id="KW-0067">ATP-binding</keyword>
<keyword id="KW-0963">Cytoplasm</keyword>
<keyword id="KW-0903">Direct protein sequencing</keyword>
<keyword id="KW-0324">Glycolysis</keyword>
<keyword id="KW-0418">Kinase</keyword>
<keyword id="KW-0460">Magnesium</keyword>
<keyword id="KW-0479">Metal-binding</keyword>
<keyword id="KW-0547">Nucleotide-binding</keyword>
<keyword id="KW-0808">Transferase</keyword>
<sequence>MKRIAVLTSGGDAPGMNAAIRAVVRKAISEGIEVYGINHGYAGMVAGDIFPLTSASVGDKIGRGGTFLYSARYPEFAQVEGQLAGIEQLKKFGIEGVVVIGGDGSYHGAMRLTEHGFPAVGLPGTIDNDIVGTDFTIGFDTAVSTVVDALDKIRDTSSSHNRTFVVEVMGRNAGDIALNAGIAAGADDISIPELEFKFENVVNNINKGYEKGKNHHIIIVAEGVMTGEEFATKLKEAGYKGDLRVSVLGHIQRGGSPTARDRVLASRMGARAVELLRDGIGGVAVGIRNEELVESPILGTAEEGALFSLTTEGGIKVNNPHKAGLELYRLNSALNNLNLN</sequence>
<feature type="chain" id="PRO_0000437187" description="ATP-dependent 6-phosphofructokinase">
    <location>
        <begin position="1"/>
        <end position="340"/>
    </location>
</feature>
<feature type="active site" description="Proton acceptor" evidence="1">
    <location>
        <position position="127"/>
    </location>
</feature>
<feature type="binding site" evidence="1">
    <location>
        <position position="11"/>
    </location>
    <ligand>
        <name>ATP</name>
        <dbReference type="ChEBI" id="CHEBI:30616"/>
    </ligand>
</feature>
<feature type="binding site" evidence="1">
    <location>
        <begin position="21"/>
        <end position="25"/>
    </location>
    <ligand>
        <name>ADP</name>
        <dbReference type="ChEBI" id="CHEBI:456216"/>
        <note>allosteric activator; ligand shared between dimeric partners</note>
    </ligand>
</feature>
<feature type="binding site" evidence="1">
    <location>
        <begin position="72"/>
        <end position="73"/>
    </location>
    <ligand>
        <name>ATP</name>
        <dbReference type="ChEBI" id="CHEBI:30616"/>
    </ligand>
</feature>
<feature type="binding site" evidence="1">
    <location>
        <begin position="102"/>
        <end position="105"/>
    </location>
    <ligand>
        <name>ATP</name>
        <dbReference type="ChEBI" id="CHEBI:30616"/>
    </ligand>
</feature>
<feature type="binding site" evidence="1">
    <location>
        <position position="103"/>
    </location>
    <ligand>
        <name>Mg(2+)</name>
        <dbReference type="ChEBI" id="CHEBI:18420"/>
        <note>catalytic</note>
    </ligand>
</feature>
<feature type="binding site" description="in other chain" evidence="1">
    <location>
        <begin position="125"/>
        <end position="127"/>
    </location>
    <ligand>
        <name>substrate</name>
        <note>ligand shared between dimeric partners</note>
    </ligand>
</feature>
<feature type="binding site" description="in other chain" evidence="1">
    <location>
        <position position="154"/>
    </location>
    <ligand>
        <name>ADP</name>
        <dbReference type="ChEBI" id="CHEBI:456216"/>
        <note>allosteric activator; ligand shared between dimeric partners</note>
    </ligand>
</feature>
<feature type="binding site" evidence="1">
    <location>
        <position position="162"/>
    </location>
    <ligand>
        <name>substrate</name>
        <note>ligand shared between dimeric partners</note>
    </ligand>
</feature>
<feature type="binding site" description="in other chain" evidence="1">
    <location>
        <begin position="169"/>
        <end position="171"/>
    </location>
    <ligand>
        <name>substrate</name>
        <note>ligand shared between dimeric partners</note>
    </ligand>
</feature>
<feature type="binding site" description="in other chain" evidence="1">
    <location>
        <begin position="185"/>
        <end position="187"/>
    </location>
    <ligand>
        <name>ADP</name>
        <dbReference type="ChEBI" id="CHEBI:456216"/>
        <note>allosteric activator; ligand shared between dimeric partners</note>
    </ligand>
</feature>
<feature type="binding site" description="in other chain" evidence="1">
    <location>
        <position position="211"/>
    </location>
    <ligand>
        <name>ADP</name>
        <dbReference type="ChEBI" id="CHEBI:456216"/>
        <note>allosteric activator; ligand shared between dimeric partners</note>
    </ligand>
</feature>
<feature type="binding site" description="in other chain" evidence="1">
    <location>
        <begin position="213"/>
        <end position="215"/>
    </location>
    <ligand>
        <name>ADP</name>
        <dbReference type="ChEBI" id="CHEBI:456216"/>
        <note>allosteric activator; ligand shared between dimeric partners</note>
    </ligand>
</feature>
<feature type="binding site" description="in other chain" evidence="1">
    <location>
        <position position="222"/>
    </location>
    <ligand>
        <name>substrate</name>
        <note>ligand shared between dimeric partners</note>
    </ligand>
</feature>
<feature type="binding site" evidence="1">
    <location>
        <position position="244"/>
    </location>
    <ligand>
        <name>substrate</name>
        <note>ligand shared between dimeric partners</note>
    </ligand>
</feature>
<feature type="binding site" description="in other chain" evidence="1">
    <location>
        <begin position="250"/>
        <end position="253"/>
    </location>
    <ligand>
        <name>substrate</name>
        <note>ligand shared between dimeric partners</note>
    </ligand>
</feature>
<protein>
    <recommendedName>
        <fullName evidence="1">ATP-dependent 6-phosphofructokinase</fullName>
        <shortName evidence="1">ATP-PFK</shortName>
        <shortName evidence="1">Phosphofructokinase</shortName>
        <ecNumber evidence="1">2.7.1.11</ecNumber>
    </recommendedName>
    <alternativeName>
        <fullName evidence="1">Phosphohexokinase</fullName>
    </alternativeName>
</protein>
<reference key="1">
    <citation type="journal article" date="1993" name="Biochem. Biophys. Res. Commun.">
        <title>The primary structure of phosphofructokinase from Lactococcus lactis.</title>
        <authorList>
            <person name="Xiao Q."/>
            <person name="Moore C.H."/>
        </authorList>
    </citation>
    <scope>PROTEIN SEQUENCE</scope>
    <source>
        <strain>C10</strain>
    </source>
</reference>
<reference key="2">
    <citation type="journal article" date="1982" name="Methods Enzymol.">
        <title>Phosphofructokinase from Streptococcus lactis.</title>
        <authorList>
            <person name="Fordyce A.M."/>
            <person name="Moore C.H."/>
            <person name="Pritchard G.G."/>
        </authorList>
    </citation>
    <scope>FUNCTION</scope>
    <scope>CATALYTIC ACTIVITY</scope>
    <scope>BIOPHYSICOCHEMICAL PROPERTIES</scope>
    <scope>SUBUNIT</scope>
    <source>
        <strain>C10</strain>
    </source>
</reference>
<gene>
    <name evidence="1" type="primary">pfkA</name>
    <name type="synonym">pfk</name>
</gene>
<evidence type="ECO:0000255" key="1">
    <source>
        <dbReference type="HAMAP-Rule" id="MF_00339"/>
    </source>
</evidence>
<evidence type="ECO:0000269" key="2">
    <source>
    </source>
</evidence>
<proteinExistence type="evidence at protein level"/>
<comment type="function">
    <text evidence="1 2">Catalyzes the phosphorylation of D-fructose 6-phosphate to fructose 1,6-bisphosphate by ATP, the first committing step of glycolysis.</text>
</comment>
<comment type="catalytic activity">
    <reaction evidence="1 2">
        <text>beta-D-fructose 6-phosphate + ATP = beta-D-fructose 1,6-bisphosphate + ADP + H(+)</text>
        <dbReference type="Rhea" id="RHEA:16109"/>
        <dbReference type="ChEBI" id="CHEBI:15378"/>
        <dbReference type="ChEBI" id="CHEBI:30616"/>
        <dbReference type="ChEBI" id="CHEBI:32966"/>
        <dbReference type="ChEBI" id="CHEBI:57634"/>
        <dbReference type="ChEBI" id="CHEBI:456216"/>
        <dbReference type="EC" id="2.7.1.11"/>
    </reaction>
</comment>
<comment type="cofactor">
    <cofactor evidence="1">
        <name>Mg(2+)</name>
        <dbReference type="ChEBI" id="CHEBI:18420"/>
    </cofactor>
</comment>
<comment type="activity regulation">
    <text evidence="1">Allosterically activated by ADP and other diphosphonucleosides, and allosterically inhibited by phosphoenolpyruvate.</text>
</comment>
<comment type="biophysicochemical properties">
    <kinetics>
        <KM evidence="2">0.18 mM for ATP</KM>
        <KM evidence="2">0.25 mM for fructose 6-phosphate</KM>
    </kinetics>
    <phDependence>
        <text evidence="2">Optimum pH is 7.2-7.8.</text>
    </phDependence>
</comment>
<comment type="pathway">
    <text evidence="1">Carbohydrate degradation; glycolysis; D-glyceraldehyde 3-phosphate and glycerone phosphate from D-glucose: step 3/4.</text>
</comment>
<comment type="subunit">
    <text evidence="1 2">Homotetramer.</text>
</comment>
<comment type="subcellular location">
    <subcellularLocation>
        <location evidence="1">Cytoplasm</location>
    </subcellularLocation>
</comment>
<comment type="similarity">
    <text evidence="1">Belongs to the phosphofructokinase type A (PFKA) family. ATP-dependent PFK group I subfamily. Prokaryotic clade 'B1' sub-subfamily.</text>
</comment>
<organism>
    <name type="scientific">Lactococcus lactis subsp. lactis</name>
    <name type="common">Streptococcus lactis</name>
    <dbReference type="NCBI Taxonomy" id="1360"/>
    <lineage>
        <taxon>Bacteria</taxon>
        <taxon>Bacillati</taxon>
        <taxon>Bacillota</taxon>
        <taxon>Bacilli</taxon>
        <taxon>Lactobacillales</taxon>
        <taxon>Streptococcaceae</taxon>
        <taxon>Lactococcus</taxon>
    </lineage>
</organism>
<name>PFKA1_LACLL</name>
<dbReference type="EC" id="2.7.1.11" evidence="1"/>
<dbReference type="PIR" id="A40620">
    <property type="entry name" value="JN0614"/>
</dbReference>
<dbReference type="SMR" id="P0DOB6"/>
<dbReference type="BioCyc" id="MetaCyc:MONOMER-13044"/>
<dbReference type="SABIO-RK" id="P0DOB6"/>
<dbReference type="UniPathway" id="UPA00109">
    <property type="reaction ID" value="UER00182"/>
</dbReference>
<dbReference type="GO" id="GO:0005945">
    <property type="term" value="C:6-phosphofructokinase complex"/>
    <property type="evidence" value="ECO:0007669"/>
    <property type="project" value="TreeGrafter"/>
</dbReference>
<dbReference type="GO" id="GO:0009986">
    <property type="term" value="C:cell surface"/>
    <property type="evidence" value="ECO:0000314"/>
    <property type="project" value="CAFA"/>
</dbReference>
<dbReference type="GO" id="GO:0003872">
    <property type="term" value="F:6-phosphofructokinase activity"/>
    <property type="evidence" value="ECO:0007669"/>
    <property type="project" value="UniProtKB-UniRule"/>
</dbReference>
<dbReference type="GO" id="GO:0016208">
    <property type="term" value="F:AMP binding"/>
    <property type="evidence" value="ECO:0007669"/>
    <property type="project" value="TreeGrafter"/>
</dbReference>
<dbReference type="GO" id="GO:0005524">
    <property type="term" value="F:ATP binding"/>
    <property type="evidence" value="ECO:0007669"/>
    <property type="project" value="UniProtKB-KW"/>
</dbReference>
<dbReference type="GO" id="GO:0070095">
    <property type="term" value="F:fructose-6-phosphate binding"/>
    <property type="evidence" value="ECO:0007669"/>
    <property type="project" value="TreeGrafter"/>
</dbReference>
<dbReference type="GO" id="GO:0042802">
    <property type="term" value="F:identical protein binding"/>
    <property type="evidence" value="ECO:0007669"/>
    <property type="project" value="TreeGrafter"/>
</dbReference>
<dbReference type="GO" id="GO:2001065">
    <property type="term" value="F:mannan binding"/>
    <property type="evidence" value="ECO:0000314"/>
    <property type="project" value="CAFA"/>
</dbReference>
<dbReference type="GO" id="GO:0046872">
    <property type="term" value="F:metal ion binding"/>
    <property type="evidence" value="ECO:0007669"/>
    <property type="project" value="UniProtKB-KW"/>
</dbReference>
<dbReference type="GO" id="GO:0048029">
    <property type="term" value="F:monosaccharide binding"/>
    <property type="evidence" value="ECO:0007669"/>
    <property type="project" value="TreeGrafter"/>
</dbReference>
<dbReference type="GO" id="GO:0061621">
    <property type="term" value="P:canonical glycolysis"/>
    <property type="evidence" value="ECO:0007669"/>
    <property type="project" value="TreeGrafter"/>
</dbReference>
<dbReference type="GO" id="GO:0030388">
    <property type="term" value="P:fructose 1,6-bisphosphate metabolic process"/>
    <property type="evidence" value="ECO:0007669"/>
    <property type="project" value="TreeGrafter"/>
</dbReference>
<dbReference type="GO" id="GO:0006002">
    <property type="term" value="P:fructose 6-phosphate metabolic process"/>
    <property type="evidence" value="ECO:0007669"/>
    <property type="project" value="InterPro"/>
</dbReference>
<dbReference type="CDD" id="cd00763">
    <property type="entry name" value="Bacterial_PFK"/>
    <property type="match status" value="1"/>
</dbReference>
<dbReference type="FunFam" id="3.40.50.450:FF:000001">
    <property type="entry name" value="ATP-dependent 6-phosphofructokinase"/>
    <property type="match status" value="1"/>
</dbReference>
<dbReference type="FunFam" id="3.40.50.460:FF:000002">
    <property type="entry name" value="ATP-dependent 6-phosphofructokinase"/>
    <property type="match status" value="1"/>
</dbReference>
<dbReference type="Gene3D" id="3.40.50.450">
    <property type="match status" value="1"/>
</dbReference>
<dbReference type="Gene3D" id="3.40.50.460">
    <property type="entry name" value="Phosphofructokinase domain"/>
    <property type="match status" value="1"/>
</dbReference>
<dbReference type="HAMAP" id="MF_00339">
    <property type="entry name" value="Phosphofructokinase_I_B1"/>
    <property type="match status" value="1"/>
</dbReference>
<dbReference type="InterPro" id="IPR022953">
    <property type="entry name" value="ATP_PFK"/>
</dbReference>
<dbReference type="InterPro" id="IPR012003">
    <property type="entry name" value="ATP_PFK_prok-type"/>
</dbReference>
<dbReference type="InterPro" id="IPR012828">
    <property type="entry name" value="PFKA_ATP_prok"/>
</dbReference>
<dbReference type="InterPro" id="IPR015912">
    <property type="entry name" value="Phosphofructokinase_CS"/>
</dbReference>
<dbReference type="InterPro" id="IPR000023">
    <property type="entry name" value="Phosphofructokinase_dom"/>
</dbReference>
<dbReference type="InterPro" id="IPR035966">
    <property type="entry name" value="PKF_sf"/>
</dbReference>
<dbReference type="NCBIfam" id="TIGR02482">
    <property type="entry name" value="PFKA_ATP"/>
    <property type="match status" value="1"/>
</dbReference>
<dbReference type="NCBIfam" id="NF002872">
    <property type="entry name" value="PRK03202.1"/>
    <property type="match status" value="1"/>
</dbReference>
<dbReference type="PANTHER" id="PTHR13697:SF4">
    <property type="entry name" value="ATP-DEPENDENT 6-PHOSPHOFRUCTOKINASE"/>
    <property type="match status" value="1"/>
</dbReference>
<dbReference type="PANTHER" id="PTHR13697">
    <property type="entry name" value="PHOSPHOFRUCTOKINASE"/>
    <property type="match status" value="1"/>
</dbReference>
<dbReference type="Pfam" id="PF00365">
    <property type="entry name" value="PFK"/>
    <property type="match status" value="1"/>
</dbReference>
<dbReference type="PIRSF" id="PIRSF000532">
    <property type="entry name" value="ATP_PFK_prok"/>
    <property type="match status" value="1"/>
</dbReference>
<dbReference type="PRINTS" id="PR00476">
    <property type="entry name" value="PHFRCTKINASE"/>
</dbReference>
<dbReference type="SUPFAM" id="SSF53784">
    <property type="entry name" value="Phosphofructokinase"/>
    <property type="match status" value="1"/>
</dbReference>
<dbReference type="PROSITE" id="PS00433">
    <property type="entry name" value="PHOSPHOFRUCTOKINASE"/>
    <property type="match status" value="1"/>
</dbReference>
<accession>P0DOB6</accession>
<accession>Q07636</accession>